<accession>A5F9C4</accession>
<accession>C3LX61</accession>
<evidence type="ECO:0000255" key="1">
    <source>
        <dbReference type="HAMAP-Rule" id="MF_00096"/>
    </source>
</evidence>
<organism>
    <name type="scientific">Vibrio cholerae serotype O1 (strain ATCC 39541 / Classical Ogawa 395 / O395)</name>
    <dbReference type="NCBI Taxonomy" id="345073"/>
    <lineage>
        <taxon>Bacteria</taxon>
        <taxon>Pseudomonadati</taxon>
        <taxon>Pseudomonadota</taxon>
        <taxon>Gammaproteobacteria</taxon>
        <taxon>Vibrionales</taxon>
        <taxon>Vibrionaceae</taxon>
        <taxon>Vibrio</taxon>
    </lineage>
</organism>
<protein>
    <recommendedName>
        <fullName evidence="1">DNA mismatch repair protein MutS</fullName>
    </recommendedName>
</protein>
<feature type="chain" id="PRO_1000071281" description="DNA mismatch repair protein MutS">
    <location>
        <begin position="1"/>
        <end position="862"/>
    </location>
</feature>
<feature type="binding site" evidence="1">
    <location>
        <begin position="621"/>
        <end position="628"/>
    </location>
    <ligand>
        <name>ATP</name>
        <dbReference type="ChEBI" id="CHEBI:30616"/>
    </ligand>
</feature>
<name>MUTS_VIBC3</name>
<reference key="1">
    <citation type="submission" date="2007-03" db="EMBL/GenBank/DDBJ databases">
        <authorList>
            <person name="Heidelberg J."/>
        </authorList>
    </citation>
    <scope>NUCLEOTIDE SEQUENCE [LARGE SCALE GENOMIC DNA]</scope>
    <source>
        <strain>ATCC 39541 / Classical Ogawa 395 / O395</strain>
    </source>
</reference>
<reference key="2">
    <citation type="journal article" date="2008" name="PLoS ONE">
        <title>A recalibrated molecular clock and independent origins for the cholera pandemic clones.</title>
        <authorList>
            <person name="Feng L."/>
            <person name="Reeves P.R."/>
            <person name="Lan R."/>
            <person name="Ren Y."/>
            <person name="Gao C."/>
            <person name="Zhou Z."/>
            <person name="Ren Y."/>
            <person name="Cheng J."/>
            <person name="Wang W."/>
            <person name="Wang J."/>
            <person name="Qian W."/>
            <person name="Li D."/>
            <person name="Wang L."/>
        </authorList>
    </citation>
    <scope>NUCLEOTIDE SEQUENCE [LARGE SCALE GENOMIC DNA]</scope>
    <source>
        <strain>ATCC 39541 / Classical Ogawa 395 / O395</strain>
    </source>
</reference>
<comment type="function">
    <text evidence="1">This protein is involved in the repair of mismatches in DNA. It is possible that it carries out the mismatch recognition step. This protein has a weak ATPase activity.</text>
</comment>
<comment type="similarity">
    <text evidence="1">Belongs to the DNA mismatch repair MutS family.</text>
</comment>
<dbReference type="EMBL" id="CP000627">
    <property type="protein sequence ID" value="ABQ22195.1"/>
    <property type="molecule type" value="Genomic_DNA"/>
</dbReference>
<dbReference type="EMBL" id="CP001235">
    <property type="protein sequence ID" value="ACP08571.1"/>
    <property type="molecule type" value="Genomic_DNA"/>
</dbReference>
<dbReference type="RefSeq" id="WP_001894770.1">
    <property type="nucleotide sequence ID" value="NZ_JAACZH010000029.1"/>
</dbReference>
<dbReference type="SMR" id="A5F9C4"/>
<dbReference type="KEGG" id="vco:VC0395_A0063"/>
<dbReference type="KEGG" id="vcr:VC395_0552"/>
<dbReference type="PATRIC" id="fig|345073.21.peg.542"/>
<dbReference type="eggNOG" id="COG0249">
    <property type="taxonomic scope" value="Bacteria"/>
</dbReference>
<dbReference type="HOGENOM" id="CLU_002472_4_0_6"/>
<dbReference type="OrthoDB" id="9802448at2"/>
<dbReference type="Proteomes" id="UP000000249">
    <property type="component" value="Chromosome 2"/>
</dbReference>
<dbReference type="GO" id="GO:0005829">
    <property type="term" value="C:cytosol"/>
    <property type="evidence" value="ECO:0007669"/>
    <property type="project" value="TreeGrafter"/>
</dbReference>
<dbReference type="GO" id="GO:0005524">
    <property type="term" value="F:ATP binding"/>
    <property type="evidence" value="ECO:0007669"/>
    <property type="project" value="UniProtKB-UniRule"/>
</dbReference>
<dbReference type="GO" id="GO:0140664">
    <property type="term" value="F:ATP-dependent DNA damage sensor activity"/>
    <property type="evidence" value="ECO:0007669"/>
    <property type="project" value="InterPro"/>
</dbReference>
<dbReference type="GO" id="GO:0003684">
    <property type="term" value="F:damaged DNA binding"/>
    <property type="evidence" value="ECO:0007669"/>
    <property type="project" value="UniProtKB-UniRule"/>
</dbReference>
<dbReference type="GO" id="GO:0030983">
    <property type="term" value="F:mismatched DNA binding"/>
    <property type="evidence" value="ECO:0007669"/>
    <property type="project" value="InterPro"/>
</dbReference>
<dbReference type="GO" id="GO:0006298">
    <property type="term" value="P:mismatch repair"/>
    <property type="evidence" value="ECO:0007669"/>
    <property type="project" value="UniProtKB-UniRule"/>
</dbReference>
<dbReference type="CDD" id="cd03284">
    <property type="entry name" value="ABC_MutS1"/>
    <property type="match status" value="1"/>
</dbReference>
<dbReference type="FunFam" id="1.10.1420.10:FF:000002">
    <property type="entry name" value="DNA mismatch repair protein MutS"/>
    <property type="match status" value="1"/>
</dbReference>
<dbReference type="FunFam" id="3.30.420.110:FF:000001">
    <property type="entry name" value="DNA mismatch repair protein MutS"/>
    <property type="match status" value="1"/>
</dbReference>
<dbReference type="FunFam" id="3.40.1170.10:FF:000001">
    <property type="entry name" value="DNA mismatch repair protein MutS"/>
    <property type="match status" value="1"/>
</dbReference>
<dbReference type="FunFam" id="3.40.50.300:FF:000283">
    <property type="entry name" value="DNA mismatch repair protein MutS"/>
    <property type="match status" value="1"/>
</dbReference>
<dbReference type="Gene3D" id="1.10.1420.10">
    <property type="match status" value="2"/>
</dbReference>
<dbReference type="Gene3D" id="6.10.140.430">
    <property type="match status" value="1"/>
</dbReference>
<dbReference type="Gene3D" id="3.40.1170.10">
    <property type="entry name" value="DNA repair protein MutS, domain I"/>
    <property type="match status" value="1"/>
</dbReference>
<dbReference type="Gene3D" id="3.30.420.110">
    <property type="entry name" value="MutS, connector domain"/>
    <property type="match status" value="1"/>
</dbReference>
<dbReference type="Gene3D" id="3.40.50.300">
    <property type="entry name" value="P-loop containing nucleotide triphosphate hydrolases"/>
    <property type="match status" value="1"/>
</dbReference>
<dbReference type="HAMAP" id="MF_00096">
    <property type="entry name" value="MutS"/>
    <property type="match status" value="1"/>
</dbReference>
<dbReference type="InterPro" id="IPR005748">
    <property type="entry name" value="DNA_mismatch_repair_MutS"/>
</dbReference>
<dbReference type="InterPro" id="IPR007695">
    <property type="entry name" value="DNA_mismatch_repair_MutS-lik_N"/>
</dbReference>
<dbReference type="InterPro" id="IPR017261">
    <property type="entry name" value="DNA_mismatch_repair_MutS/MSH"/>
</dbReference>
<dbReference type="InterPro" id="IPR000432">
    <property type="entry name" value="DNA_mismatch_repair_MutS_C"/>
</dbReference>
<dbReference type="InterPro" id="IPR007861">
    <property type="entry name" value="DNA_mismatch_repair_MutS_clamp"/>
</dbReference>
<dbReference type="InterPro" id="IPR007696">
    <property type="entry name" value="DNA_mismatch_repair_MutS_core"/>
</dbReference>
<dbReference type="InterPro" id="IPR016151">
    <property type="entry name" value="DNA_mismatch_repair_MutS_N"/>
</dbReference>
<dbReference type="InterPro" id="IPR036187">
    <property type="entry name" value="DNA_mismatch_repair_MutS_sf"/>
</dbReference>
<dbReference type="InterPro" id="IPR007860">
    <property type="entry name" value="DNA_mmatch_repair_MutS_con_dom"/>
</dbReference>
<dbReference type="InterPro" id="IPR045076">
    <property type="entry name" value="MutS"/>
</dbReference>
<dbReference type="InterPro" id="IPR036678">
    <property type="entry name" value="MutS_con_dom_sf"/>
</dbReference>
<dbReference type="InterPro" id="IPR027417">
    <property type="entry name" value="P-loop_NTPase"/>
</dbReference>
<dbReference type="NCBIfam" id="TIGR01070">
    <property type="entry name" value="mutS1"/>
    <property type="match status" value="1"/>
</dbReference>
<dbReference type="NCBIfam" id="NF003810">
    <property type="entry name" value="PRK05399.1"/>
    <property type="match status" value="1"/>
</dbReference>
<dbReference type="PANTHER" id="PTHR11361:SF34">
    <property type="entry name" value="DNA MISMATCH REPAIR PROTEIN MSH1, MITOCHONDRIAL"/>
    <property type="match status" value="1"/>
</dbReference>
<dbReference type="PANTHER" id="PTHR11361">
    <property type="entry name" value="DNA MISMATCH REPAIR PROTEIN MUTS FAMILY MEMBER"/>
    <property type="match status" value="1"/>
</dbReference>
<dbReference type="Pfam" id="PF01624">
    <property type="entry name" value="MutS_I"/>
    <property type="match status" value="1"/>
</dbReference>
<dbReference type="Pfam" id="PF05188">
    <property type="entry name" value="MutS_II"/>
    <property type="match status" value="1"/>
</dbReference>
<dbReference type="Pfam" id="PF05192">
    <property type="entry name" value="MutS_III"/>
    <property type="match status" value="1"/>
</dbReference>
<dbReference type="Pfam" id="PF05190">
    <property type="entry name" value="MutS_IV"/>
    <property type="match status" value="1"/>
</dbReference>
<dbReference type="Pfam" id="PF00488">
    <property type="entry name" value="MutS_V"/>
    <property type="match status" value="1"/>
</dbReference>
<dbReference type="PIRSF" id="PIRSF037677">
    <property type="entry name" value="DNA_mis_repair_Msh6"/>
    <property type="match status" value="1"/>
</dbReference>
<dbReference type="SMART" id="SM00534">
    <property type="entry name" value="MUTSac"/>
    <property type="match status" value="1"/>
</dbReference>
<dbReference type="SMART" id="SM00533">
    <property type="entry name" value="MUTSd"/>
    <property type="match status" value="1"/>
</dbReference>
<dbReference type="SUPFAM" id="SSF55271">
    <property type="entry name" value="DNA repair protein MutS, domain I"/>
    <property type="match status" value="1"/>
</dbReference>
<dbReference type="SUPFAM" id="SSF53150">
    <property type="entry name" value="DNA repair protein MutS, domain II"/>
    <property type="match status" value="1"/>
</dbReference>
<dbReference type="SUPFAM" id="SSF48334">
    <property type="entry name" value="DNA repair protein MutS, domain III"/>
    <property type="match status" value="1"/>
</dbReference>
<dbReference type="SUPFAM" id="SSF52540">
    <property type="entry name" value="P-loop containing nucleoside triphosphate hydrolases"/>
    <property type="match status" value="1"/>
</dbReference>
<dbReference type="PROSITE" id="PS00486">
    <property type="entry name" value="DNA_MISMATCH_REPAIR_2"/>
    <property type="match status" value="1"/>
</dbReference>
<gene>
    <name evidence="1" type="primary">mutS</name>
    <name type="ordered locus">VC0395_A0063</name>
    <name type="ordered locus">VC395_0552</name>
</gene>
<keyword id="KW-0067">ATP-binding</keyword>
<keyword id="KW-0227">DNA damage</keyword>
<keyword id="KW-0234">DNA repair</keyword>
<keyword id="KW-0238">DNA-binding</keyword>
<keyword id="KW-0547">Nucleotide-binding</keyword>
<sequence>MMKSNASPSESLSHHTPMMQQYLRLKAENPDILLFYRMGDFYELFYDDAKRASELLDISLTKRGASAGEPIPMAGVPFHAVEGYLAKLVQMGESVAICEQIGDPATSKGPVERKVVRIVTPGTVTDEALLSERVDNLIAAIYHHNGRFGYATMDITSGRFQLSEPQTEEEMAAELQRTSPRELLFPEDFSPVHLMASRQGNRRRPIWEFELDTAKQQLNQQFGTRDLVGFGVEQAKLGLCAAGCLIQYVKDTQRTALPHIRSLTWDRQDQSVILDAATRRNLELTHNLAGGTDNTLAEVLDHCATPMGSRMLKRWIHQPMRDNATLNQRLDAITELKETALYGELHPVLKQIGDIERILARLALRSARPRDLARLRHAMQQLPELHSVMSELKQPHLTELRTHAEPMDELCDLLERAIKENPPVVIRDGGVIADGYSAELDEWRDLANGATEFLERLEAEERDRHGIDTLKVGYNNVHGFYIQVSRGQSHLVPPHYVRRQTLKNAERYIIEELKQHEDKVLNSKSRALALEKQLWEELFDLLMPHLEQLQQLAASVAQLDVLQNLAERAENLEYCRPTLVQEAGIHIQGGRHPVVERVMNEPFIANPIELNPQRRMLIITGPNMGGKSTYMRQTALIALMAHIGSYVPAESASIGPLDRIFTRIGASDDLASGRSTFMVEMTETANILHNATRNSLVLMDEIGRGTSTYDGLSLAWASAEWLAKEIGAMTLFATHYFELTELPNVLPHLANVHLDAVEHGDGIAFMHAVQEGAASKSYGLAVAGLAGVPKPVIKNARAKLQQLELLSSQPAETRKPSRVDIANQLSLIPEPSAVEQALAGVDPDQLTPRQALDMLYQLKKLL</sequence>
<proteinExistence type="inferred from homology"/>